<comment type="subunit">
    <text evidence="1">Part of the 50S ribosomal subunit.</text>
</comment>
<comment type="similarity">
    <text evidence="1">Belongs to the universal ribosomal protein uL30 family.</text>
</comment>
<keyword id="KW-1185">Reference proteome</keyword>
<keyword id="KW-0687">Ribonucleoprotein</keyword>
<keyword id="KW-0689">Ribosomal protein</keyword>
<accession>A6X0D6</accession>
<name>RL30_BRUA4</name>
<proteinExistence type="inferred from homology"/>
<feature type="chain" id="PRO_0000347126" description="Large ribosomal subunit protein uL30">
    <location>
        <begin position="1"/>
        <end position="66"/>
    </location>
</feature>
<gene>
    <name evidence="1" type="primary">rpmD</name>
    <name type="ordered locus">Oant_1974</name>
</gene>
<organism>
    <name type="scientific">Brucella anthropi (strain ATCC 49188 / DSM 6882 / CCUG 24695 / JCM 21032 / LMG 3331 / NBRC 15819 / NCTC 12168 / Alc 37)</name>
    <name type="common">Ochrobactrum anthropi</name>
    <dbReference type="NCBI Taxonomy" id="439375"/>
    <lineage>
        <taxon>Bacteria</taxon>
        <taxon>Pseudomonadati</taxon>
        <taxon>Pseudomonadota</taxon>
        <taxon>Alphaproteobacteria</taxon>
        <taxon>Hyphomicrobiales</taxon>
        <taxon>Brucellaceae</taxon>
        <taxon>Brucella/Ochrobactrum group</taxon>
        <taxon>Brucella</taxon>
    </lineage>
</organism>
<protein>
    <recommendedName>
        <fullName evidence="1">Large ribosomal subunit protein uL30</fullName>
    </recommendedName>
    <alternativeName>
        <fullName evidence="2">50S ribosomal protein L30</fullName>
    </alternativeName>
</protein>
<sequence>MMAEKKGKTVTVEQIGSPIRRPAEQRATLIGLGLNKMHRRSTLEDTPAVRGMIAKLPHLVRVVDEA</sequence>
<evidence type="ECO:0000255" key="1">
    <source>
        <dbReference type="HAMAP-Rule" id="MF_01371"/>
    </source>
</evidence>
<evidence type="ECO:0000305" key="2"/>
<reference key="1">
    <citation type="journal article" date="2011" name="J. Bacteriol.">
        <title>Genome of Ochrobactrum anthropi ATCC 49188 T, a versatile opportunistic pathogen and symbiont of several eukaryotic hosts.</title>
        <authorList>
            <person name="Chain P.S."/>
            <person name="Lang D.M."/>
            <person name="Comerci D.J."/>
            <person name="Malfatti S.A."/>
            <person name="Vergez L.M."/>
            <person name="Shin M."/>
            <person name="Ugalde R.A."/>
            <person name="Garcia E."/>
            <person name="Tolmasky M.E."/>
        </authorList>
    </citation>
    <scope>NUCLEOTIDE SEQUENCE [LARGE SCALE GENOMIC DNA]</scope>
    <source>
        <strain>ATCC 49188 / DSM 6882 / CCUG 24695 / JCM 21032 / LMG 3331 / NBRC 15819 / NCTC 12168 / Alc 37</strain>
    </source>
</reference>
<dbReference type="EMBL" id="CP000758">
    <property type="protein sequence ID" value="ABS14690.1"/>
    <property type="molecule type" value="Genomic_DNA"/>
</dbReference>
<dbReference type="SMR" id="A6X0D6"/>
<dbReference type="STRING" id="439375.Oant_1974"/>
<dbReference type="KEGG" id="oan:Oant_1974"/>
<dbReference type="eggNOG" id="COG1841">
    <property type="taxonomic scope" value="Bacteria"/>
</dbReference>
<dbReference type="HOGENOM" id="CLU_131047_1_2_5"/>
<dbReference type="Proteomes" id="UP000002301">
    <property type="component" value="Chromosome 1"/>
</dbReference>
<dbReference type="GO" id="GO:0022625">
    <property type="term" value="C:cytosolic large ribosomal subunit"/>
    <property type="evidence" value="ECO:0007669"/>
    <property type="project" value="TreeGrafter"/>
</dbReference>
<dbReference type="GO" id="GO:0003735">
    <property type="term" value="F:structural constituent of ribosome"/>
    <property type="evidence" value="ECO:0007669"/>
    <property type="project" value="InterPro"/>
</dbReference>
<dbReference type="GO" id="GO:0006412">
    <property type="term" value="P:translation"/>
    <property type="evidence" value="ECO:0007669"/>
    <property type="project" value="UniProtKB-UniRule"/>
</dbReference>
<dbReference type="CDD" id="cd01658">
    <property type="entry name" value="Ribosomal_L30"/>
    <property type="match status" value="1"/>
</dbReference>
<dbReference type="Gene3D" id="3.30.1390.20">
    <property type="entry name" value="Ribosomal protein L30, ferredoxin-like fold domain"/>
    <property type="match status" value="1"/>
</dbReference>
<dbReference type="HAMAP" id="MF_01371_B">
    <property type="entry name" value="Ribosomal_uL30_B"/>
    <property type="match status" value="1"/>
</dbReference>
<dbReference type="InterPro" id="IPR036919">
    <property type="entry name" value="Ribo_uL30_ferredoxin-like_sf"/>
</dbReference>
<dbReference type="InterPro" id="IPR005996">
    <property type="entry name" value="Ribosomal_uL30_bac-type"/>
</dbReference>
<dbReference type="InterPro" id="IPR016082">
    <property type="entry name" value="Ribosomal_uL30_ferredoxin-like"/>
</dbReference>
<dbReference type="NCBIfam" id="TIGR01308">
    <property type="entry name" value="rpmD_bact"/>
    <property type="match status" value="1"/>
</dbReference>
<dbReference type="PANTHER" id="PTHR15892:SF2">
    <property type="entry name" value="LARGE RIBOSOMAL SUBUNIT PROTEIN UL30M"/>
    <property type="match status" value="1"/>
</dbReference>
<dbReference type="PANTHER" id="PTHR15892">
    <property type="entry name" value="MITOCHONDRIAL RIBOSOMAL PROTEIN L30"/>
    <property type="match status" value="1"/>
</dbReference>
<dbReference type="Pfam" id="PF00327">
    <property type="entry name" value="Ribosomal_L30"/>
    <property type="match status" value="1"/>
</dbReference>
<dbReference type="PIRSF" id="PIRSF002211">
    <property type="entry name" value="Ribosomal_L30_bac-type"/>
    <property type="match status" value="1"/>
</dbReference>
<dbReference type="SUPFAM" id="SSF55129">
    <property type="entry name" value="Ribosomal protein L30p/L7e"/>
    <property type="match status" value="1"/>
</dbReference>